<geneLocation type="mitochondrion"/>
<sequence>MNMMLAMLINITLSLCLISLAFWLPQLNLYSEKASPYECGFDPMSSARLPFSMKFFLVGITFLLLDLEIALLLPLPWAIQSTNMITTTIVSLSLVSILALGLSYEWMNKGLEWTE</sequence>
<feature type="chain" id="PRO_0000117820" description="NADH-ubiquinone oxidoreductase chain 3">
    <location>
        <begin position="1"/>
        <end position="115"/>
    </location>
</feature>
<feature type="transmembrane region" description="Helical" evidence="3">
    <location>
        <begin position="4"/>
        <end position="24"/>
    </location>
</feature>
<feature type="transmembrane region" description="Helical" evidence="3">
    <location>
        <begin position="55"/>
        <end position="75"/>
    </location>
</feature>
<feature type="transmembrane region" description="Helical" evidence="3">
    <location>
        <begin position="84"/>
        <end position="104"/>
    </location>
</feature>
<accession>O21569</accession>
<evidence type="ECO:0000250" key="1">
    <source>
        <dbReference type="UniProtKB" id="P03897"/>
    </source>
</evidence>
<evidence type="ECO:0000250" key="2">
    <source>
        <dbReference type="UniProtKB" id="P03898"/>
    </source>
</evidence>
<evidence type="ECO:0000255" key="3"/>
<evidence type="ECO:0000305" key="4"/>
<gene>
    <name evidence="1" type="primary">MT-ND3</name>
    <name type="synonym">MTND3</name>
    <name type="synonym">NADH3</name>
    <name type="synonym">ND3</name>
</gene>
<protein>
    <recommendedName>
        <fullName evidence="1">NADH-ubiquinone oxidoreductase chain 3</fullName>
        <ecNumber evidence="1">7.1.1.2</ecNumber>
    </recommendedName>
    <alternativeName>
        <fullName>NADH dehydrogenase subunit 3</fullName>
    </alternativeName>
</protein>
<keyword id="KW-0249">Electron transport</keyword>
<keyword id="KW-0472">Membrane</keyword>
<keyword id="KW-0496">Mitochondrion</keyword>
<keyword id="KW-0999">Mitochondrion inner membrane</keyword>
<keyword id="KW-0520">NAD</keyword>
<keyword id="KW-0679">Respiratory chain</keyword>
<keyword id="KW-1278">Translocase</keyword>
<keyword id="KW-0812">Transmembrane</keyword>
<keyword id="KW-1133">Transmembrane helix</keyword>
<keyword id="KW-0813">Transport</keyword>
<keyword id="KW-0830">Ubiquinone</keyword>
<proteinExistence type="inferred from homology"/>
<reference key="1">
    <citation type="journal article" date="1998" name="Mol. Biol. Evol.">
        <title>Molecular systematics and paleobiogeography of the South American sigmodontine rodents.</title>
        <authorList>
            <person name="Engel S.R."/>
            <person name="Hogan K.M."/>
            <person name="Taylor J.F."/>
            <person name="Davis S.K."/>
        </authorList>
    </citation>
    <scope>NUCLEOTIDE SEQUENCE [GENOMIC DNA]</scope>
</reference>
<comment type="function">
    <text evidence="1">Core subunit of the mitochondrial membrane respiratory chain NADH dehydrogenase (Complex I) which catalyzes electron transfer from NADH through the respiratory chain, using ubiquinone as an electron acceptor. Essential for the catalytic activity of complex I.</text>
</comment>
<comment type="catalytic activity">
    <reaction evidence="1">
        <text>a ubiquinone + NADH + 5 H(+)(in) = a ubiquinol + NAD(+) + 4 H(+)(out)</text>
        <dbReference type="Rhea" id="RHEA:29091"/>
        <dbReference type="Rhea" id="RHEA-COMP:9565"/>
        <dbReference type="Rhea" id="RHEA-COMP:9566"/>
        <dbReference type="ChEBI" id="CHEBI:15378"/>
        <dbReference type="ChEBI" id="CHEBI:16389"/>
        <dbReference type="ChEBI" id="CHEBI:17976"/>
        <dbReference type="ChEBI" id="CHEBI:57540"/>
        <dbReference type="ChEBI" id="CHEBI:57945"/>
        <dbReference type="EC" id="7.1.1.2"/>
    </reaction>
</comment>
<comment type="subunit">
    <text evidence="1">Core subunit of respiratory chain NADH dehydrogenase (Complex I) which is composed of 45 different subunits. Interacts with TMEM186. Interacts with TMEM242 (By similarity).</text>
</comment>
<comment type="subcellular location">
    <subcellularLocation>
        <location evidence="2">Mitochondrion inner membrane</location>
        <topology evidence="3">Multi-pass membrane protein</topology>
    </subcellularLocation>
</comment>
<comment type="similarity">
    <text evidence="4">Belongs to the complex I subunit 3 family.</text>
</comment>
<name>NU3M_REIAU</name>
<organism>
    <name type="scientific">Reithrodon auritus</name>
    <name type="common">Bunny rat</name>
    <dbReference type="NCBI Taxonomy" id="56234"/>
    <lineage>
        <taxon>Eukaryota</taxon>
        <taxon>Metazoa</taxon>
        <taxon>Chordata</taxon>
        <taxon>Craniata</taxon>
        <taxon>Vertebrata</taxon>
        <taxon>Euteleostomi</taxon>
        <taxon>Mammalia</taxon>
        <taxon>Eutheria</taxon>
        <taxon>Euarchontoglires</taxon>
        <taxon>Glires</taxon>
        <taxon>Rodentia</taxon>
        <taxon>Myomorpha</taxon>
        <taxon>Muroidea</taxon>
        <taxon>Cricetidae</taxon>
        <taxon>Sigmodontinae</taxon>
        <taxon>Reithrodon</taxon>
    </lineage>
</organism>
<dbReference type="EC" id="7.1.1.2" evidence="1"/>
<dbReference type="EMBL" id="U83824">
    <property type="protein sequence ID" value="AAB87229.1"/>
    <property type="molecule type" value="Genomic_DNA"/>
</dbReference>
<dbReference type="SMR" id="O21569"/>
<dbReference type="GO" id="GO:0005743">
    <property type="term" value="C:mitochondrial inner membrane"/>
    <property type="evidence" value="ECO:0000250"/>
    <property type="project" value="UniProtKB"/>
</dbReference>
<dbReference type="GO" id="GO:0030964">
    <property type="term" value="C:NADH dehydrogenase complex"/>
    <property type="evidence" value="ECO:0007669"/>
    <property type="project" value="TreeGrafter"/>
</dbReference>
<dbReference type="GO" id="GO:0008137">
    <property type="term" value="F:NADH dehydrogenase (ubiquinone) activity"/>
    <property type="evidence" value="ECO:0000250"/>
    <property type="project" value="UniProtKB"/>
</dbReference>
<dbReference type="GO" id="GO:0006120">
    <property type="term" value="P:mitochondrial electron transport, NADH to ubiquinone"/>
    <property type="evidence" value="ECO:0000250"/>
    <property type="project" value="UniProtKB"/>
</dbReference>
<dbReference type="FunFam" id="1.20.58.1610:FF:000004">
    <property type="entry name" value="NADH-quinone oxidoreductase subunit A"/>
    <property type="match status" value="1"/>
</dbReference>
<dbReference type="Gene3D" id="1.20.58.1610">
    <property type="entry name" value="NADH:ubiquinone/plastoquinone oxidoreductase, chain 3"/>
    <property type="match status" value="1"/>
</dbReference>
<dbReference type="InterPro" id="IPR000440">
    <property type="entry name" value="NADH_UbQ/plastoQ_OxRdtase_su3"/>
</dbReference>
<dbReference type="InterPro" id="IPR038430">
    <property type="entry name" value="NDAH_ubi_oxred_su3_sf"/>
</dbReference>
<dbReference type="PANTHER" id="PTHR11058">
    <property type="entry name" value="NADH-UBIQUINONE OXIDOREDUCTASE CHAIN 3"/>
    <property type="match status" value="1"/>
</dbReference>
<dbReference type="PANTHER" id="PTHR11058:SF9">
    <property type="entry name" value="NADH-UBIQUINONE OXIDOREDUCTASE CHAIN 3"/>
    <property type="match status" value="1"/>
</dbReference>
<dbReference type="Pfam" id="PF00507">
    <property type="entry name" value="Oxidored_q4"/>
    <property type="match status" value="1"/>
</dbReference>